<evidence type="ECO:0000250" key="1"/>
<evidence type="ECO:0000255" key="2"/>
<evidence type="ECO:0000255" key="3">
    <source>
        <dbReference type="PROSITE-ProRule" id="PRU00274"/>
    </source>
</evidence>
<evidence type="ECO:0000256" key="4">
    <source>
        <dbReference type="SAM" id="MobiDB-lite"/>
    </source>
</evidence>
<evidence type="ECO:0000269" key="5">
    <source>
    </source>
</evidence>
<evidence type="ECO:0000269" key="6">
    <source>
    </source>
</evidence>
<evidence type="ECO:0000305" key="7"/>
<feature type="signal peptide" evidence="2">
    <location>
        <begin position="1"/>
        <end position="22"/>
    </location>
</feature>
<feature type="chain" id="PRO_0000422245" description="Serine protease 56">
    <location>
        <begin position="23"/>
        <end position="604"/>
    </location>
</feature>
<feature type="domain" description="Peptidase S1" evidence="3">
    <location>
        <begin position="109"/>
        <end position="341"/>
    </location>
</feature>
<feature type="region of interest" description="Disordered" evidence="4">
    <location>
        <begin position="70"/>
        <end position="94"/>
    </location>
</feature>
<feature type="region of interest" description="Disordered" evidence="4">
    <location>
        <begin position="424"/>
        <end position="452"/>
    </location>
</feature>
<feature type="region of interest" description="Disordered" evidence="4">
    <location>
        <begin position="578"/>
        <end position="604"/>
    </location>
</feature>
<feature type="compositionally biased region" description="Pro residues" evidence="4">
    <location>
        <begin position="75"/>
        <end position="89"/>
    </location>
</feature>
<feature type="active site" description="Charge relay system" evidence="1">
    <location>
        <position position="149"/>
    </location>
</feature>
<feature type="active site" description="Charge relay system" evidence="1">
    <location>
        <position position="195"/>
    </location>
</feature>
<feature type="active site" description="Charge relay system" evidence="1">
    <location>
        <position position="290"/>
    </location>
</feature>
<feature type="glycosylation site" description="N-linked (GlcNAc...) asparagine" evidence="2">
    <location>
        <position position="101"/>
    </location>
</feature>
<feature type="disulfide bond" evidence="3">
    <location>
        <begin position="134"/>
        <end position="150"/>
    </location>
</feature>
<feature type="disulfide bond" evidence="3">
    <location>
        <begin position="229"/>
        <end position="296"/>
    </location>
</feature>
<feature type="disulfide bond" evidence="3">
    <location>
        <begin position="260"/>
        <end position="275"/>
    </location>
</feature>
<feature type="disulfide bond" evidence="3">
    <location>
        <begin position="286"/>
        <end position="317"/>
    </location>
</feature>
<organism>
    <name type="scientific">Mus musculus</name>
    <name type="common">Mouse</name>
    <dbReference type="NCBI Taxonomy" id="10090"/>
    <lineage>
        <taxon>Eukaryota</taxon>
        <taxon>Metazoa</taxon>
        <taxon>Chordata</taxon>
        <taxon>Craniata</taxon>
        <taxon>Vertebrata</taxon>
        <taxon>Euteleostomi</taxon>
        <taxon>Mammalia</taxon>
        <taxon>Eutheria</taxon>
        <taxon>Euarchontoglires</taxon>
        <taxon>Glires</taxon>
        <taxon>Rodentia</taxon>
        <taxon>Myomorpha</taxon>
        <taxon>Muroidea</taxon>
        <taxon>Muridae</taxon>
        <taxon>Murinae</taxon>
        <taxon>Mus</taxon>
        <taxon>Mus</taxon>
    </lineage>
</organism>
<reference key="1">
    <citation type="journal article" date="2011" name="Am. J. Hum. Genet.">
        <title>Autosomal-recessive posterior microphthalmos is caused by mutations in PRSS56, a gene encoding a trypsin-like serine protease.</title>
        <authorList>
            <person name="Gal A."/>
            <person name="Rau I."/>
            <person name="El Matri L."/>
            <person name="Kreienkamp H.J."/>
            <person name="Fehr S."/>
            <person name="Baklouti K."/>
            <person name="Chouchane I."/>
            <person name="Li Y."/>
            <person name="Rehbein M."/>
            <person name="Fuchs J."/>
            <person name="Fledelius H.C."/>
            <person name="Vilhelmsen K."/>
            <person name="Schorderet D.F."/>
            <person name="Munier F.L."/>
            <person name="Ostergaard E."/>
            <person name="Thompson D.A."/>
            <person name="Rosenberg T."/>
        </authorList>
    </citation>
    <scope>NUCLEOTIDE SEQUENCE [MRNA]</scope>
    <scope>TISSUE SPECIFICITY</scope>
    <scope>DEVELOPMENTAL STAGE</scope>
    <source>
        <strain>C57BL/6J</strain>
    </source>
</reference>
<reference key="2">
    <citation type="journal article" date="2011" name="Nat. Genet.">
        <title>Alteration of the serine protease PRSS56 causes angle-closure glaucoma in mice and posterior microphthalmia in humans and mice.</title>
        <authorList>
            <person name="Nair K.S."/>
            <person name="Hmani-Aifa M."/>
            <person name="Ali Z."/>
            <person name="Kearney A.L."/>
            <person name="Ben Salem S."/>
            <person name="Macalinao D.G."/>
            <person name="Cosma I.M."/>
            <person name="Bouassida W."/>
            <person name="Hakim B."/>
            <person name="Benzina Z."/>
            <person name="Soto I."/>
            <person name="Soderkvist P."/>
            <person name="Howell G.R."/>
            <person name="Smith R.S."/>
            <person name="Ayadi H."/>
            <person name="John S.W."/>
        </authorList>
    </citation>
    <scope>NUCLEOTIDE SEQUENCE [MRNA]</scope>
    <scope>FUNCTION</scope>
    <scope>SUBCELLULAR LOCATION</scope>
    <scope>TISSUE SPECIFICITY</scope>
    <scope>DISRUPTION PHENOTYPE</scope>
    <source>
        <strain>C57BL/6J</strain>
    </source>
</reference>
<reference key="3">
    <citation type="journal article" date="2009" name="PLoS Biol.">
        <title>Lineage-specific biology revealed by a finished genome assembly of the mouse.</title>
        <authorList>
            <person name="Church D.M."/>
            <person name="Goodstadt L."/>
            <person name="Hillier L.W."/>
            <person name="Zody M.C."/>
            <person name="Goldstein S."/>
            <person name="She X."/>
            <person name="Bult C.J."/>
            <person name="Agarwala R."/>
            <person name="Cherry J.L."/>
            <person name="DiCuccio M."/>
            <person name="Hlavina W."/>
            <person name="Kapustin Y."/>
            <person name="Meric P."/>
            <person name="Maglott D."/>
            <person name="Birtle Z."/>
            <person name="Marques A.C."/>
            <person name="Graves T."/>
            <person name="Zhou S."/>
            <person name="Teague B."/>
            <person name="Potamousis K."/>
            <person name="Churas C."/>
            <person name="Place M."/>
            <person name="Herschleb J."/>
            <person name="Runnheim R."/>
            <person name="Forrest D."/>
            <person name="Amos-Landgraf J."/>
            <person name="Schwartz D.C."/>
            <person name="Cheng Z."/>
            <person name="Lindblad-Toh K."/>
            <person name="Eichler E.E."/>
            <person name="Ponting C.P."/>
        </authorList>
    </citation>
    <scope>NUCLEOTIDE SEQUENCE [LARGE SCALE GENOMIC DNA]</scope>
    <source>
        <strain>C57BL/6J</strain>
    </source>
</reference>
<reference key="4">
    <citation type="journal article" date="2005" name="Science">
        <title>The transcriptional landscape of the mammalian genome.</title>
        <authorList>
            <person name="Carninci P."/>
            <person name="Kasukawa T."/>
            <person name="Katayama S."/>
            <person name="Gough J."/>
            <person name="Frith M.C."/>
            <person name="Maeda N."/>
            <person name="Oyama R."/>
            <person name="Ravasi T."/>
            <person name="Lenhard B."/>
            <person name="Wells C."/>
            <person name="Kodzius R."/>
            <person name="Shimokawa K."/>
            <person name="Bajic V.B."/>
            <person name="Brenner S.E."/>
            <person name="Batalov S."/>
            <person name="Forrest A.R."/>
            <person name="Zavolan M."/>
            <person name="Davis M.J."/>
            <person name="Wilming L.G."/>
            <person name="Aidinis V."/>
            <person name="Allen J.E."/>
            <person name="Ambesi-Impiombato A."/>
            <person name="Apweiler R."/>
            <person name="Aturaliya R.N."/>
            <person name="Bailey T.L."/>
            <person name="Bansal M."/>
            <person name="Baxter L."/>
            <person name="Beisel K.W."/>
            <person name="Bersano T."/>
            <person name="Bono H."/>
            <person name="Chalk A.M."/>
            <person name="Chiu K.P."/>
            <person name="Choudhary V."/>
            <person name="Christoffels A."/>
            <person name="Clutterbuck D.R."/>
            <person name="Crowe M.L."/>
            <person name="Dalla E."/>
            <person name="Dalrymple B.P."/>
            <person name="de Bono B."/>
            <person name="Della Gatta G."/>
            <person name="di Bernardo D."/>
            <person name="Down T."/>
            <person name="Engstrom P."/>
            <person name="Fagiolini M."/>
            <person name="Faulkner G."/>
            <person name="Fletcher C.F."/>
            <person name="Fukushima T."/>
            <person name="Furuno M."/>
            <person name="Futaki S."/>
            <person name="Gariboldi M."/>
            <person name="Georgii-Hemming P."/>
            <person name="Gingeras T.R."/>
            <person name="Gojobori T."/>
            <person name="Green R.E."/>
            <person name="Gustincich S."/>
            <person name="Harbers M."/>
            <person name="Hayashi Y."/>
            <person name="Hensch T.K."/>
            <person name="Hirokawa N."/>
            <person name="Hill D."/>
            <person name="Huminiecki L."/>
            <person name="Iacono M."/>
            <person name="Ikeo K."/>
            <person name="Iwama A."/>
            <person name="Ishikawa T."/>
            <person name="Jakt M."/>
            <person name="Kanapin A."/>
            <person name="Katoh M."/>
            <person name="Kawasawa Y."/>
            <person name="Kelso J."/>
            <person name="Kitamura H."/>
            <person name="Kitano H."/>
            <person name="Kollias G."/>
            <person name="Krishnan S.P."/>
            <person name="Kruger A."/>
            <person name="Kummerfeld S.K."/>
            <person name="Kurochkin I.V."/>
            <person name="Lareau L.F."/>
            <person name="Lazarevic D."/>
            <person name="Lipovich L."/>
            <person name="Liu J."/>
            <person name="Liuni S."/>
            <person name="McWilliam S."/>
            <person name="Madan Babu M."/>
            <person name="Madera M."/>
            <person name="Marchionni L."/>
            <person name="Matsuda H."/>
            <person name="Matsuzawa S."/>
            <person name="Miki H."/>
            <person name="Mignone F."/>
            <person name="Miyake S."/>
            <person name="Morris K."/>
            <person name="Mottagui-Tabar S."/>
            <person name="Mulder N."/>
            <person name="Nakano N."/>
            <person name="Nakauchi H."/>
            <person name="Ng P."/>
            <person name="Nilsson R."/>
            <person name="Nishiguchi S."/>
            <person name="Nishikawa S."/>
            <person name="Nori F."/>
            <person name="Ohara O."/>
            <person name="Okazaki Y."/>
            <person name="Orlando V."/>
            <person name="Pang K.C."/>
            <person name="Pavan W.J."/>
            <person name="Pavesi G."/>
            <person name="Pesole G."/>
            <person name="Petrovsky N."/>
            <person name="Piazza S."/>
            <person name="Reed J."/>
            <person name="Reid J.F."/>
            <person name="Ring B.Z."/>
            <person name="Ringwald M."/>
            <person name="Rost B."/>
            <person name="Ruan Y."/>
            <person name="Salzberg S.L."/>
            <person name="Sandelin A."/>
            <person name="Schneider C."/>
            <person name="Schoenbach C."/>
            <person name="Sekiguchi K."/>
            <person name="Semple C.A."/>
            <person name="Seno S."/>
            <person name="Sessa L."/>
            <person name="Sheng Y."/>
            <person name="Shibata Y."/>
            <person name="Shimada H."/>
            <person name="Shimada K."/>
            <person name="Silva D."/>
            <person name="Sinclair B."/>
            <person name="Sperling S."/>
            <person name="Stupka E."/>
            <person name="Sugiura K."/>
            <person name="Sultana R."/>
            <person name="Takenaka Y."/>
            <person name="Taki K."/>
            <person name="Tammoja K."/>
            <person name="Tan S.L."/>
            <person name="Tang S."/>
            <person name="Taylor M.S."/>
            <person name="Tegner J."/>
            <person name="Teichmann S.A."/>
            <person name="Ueda H.R."/>
            <person name="van Nimwegen E."/>
            <person name="Verardo R."/>
            <person name="Wei C.L."/>
            <person name="Yagi K."/>
            <person name="Yamanishi H."/>
            <person name="Zabarovsky E."/>
            <person name="Zhu S."/>
            <person name="Zimmer A."/>
            <person name="Hide W."/>
            <person name="Bult C."/>
            <person name="Grimmond S.M."/>
            <person name="Teasdale R.D."/>
            <person name="Liu E.T."/>
            <person name="Brusic V."/>
            <person name="Quackenbush J."/>
            <person name="Wahlestedt C."/>
            <person name="Mattick J.S."/>
            <person name="Hume D.A."/>
            <person name="Kai C."/>
            <person name="Sasaki D."/>
            <person name="Tomaru Y."/>
            <person name="Fukuda S."/>
            <person name="Kanamori-Katayama M."/>
            <person name="Suzuki M."/>
            <person name="Aoki J."/>
            <person name="Arakawa T."/>
            <person name="Iida J."/>
            <person name="Imamura K."/>
            <person name="Itoh M."/>
            <person name="Kato T."/>
            <person name="Kawaji H."/>
            <person name="Kawagashira N."/>
            <person name="Kawashima T."/>
            <person name="Kojima M."/>
            <person name="Kondo S."/>
            <person name="Konno H."/>
            <person name="Nakano K."/>
            <person name="Ninomiya N."/>
            <person name="Nishio T."/>
            <person name="Okada M."/>
            <person name="Plessy C."/>
            <person name="Shibata K."/>
            <person name="Shiraki T."/>
            <person name="Suzuki S."/>
            <person name="Tagami M."/>
            <person name="Waki K."/>
            <person name="Watahiki A."/>
            <person name="Okamura-Oho Y."/>
            <person name="Suzuki H."/>
            <person name="Kawai J."/>
            <person name="Hayashizaki Y."/>
        </authorList>
    </citation>
    <scope>NUCLEOTIDE SEQUENCE [LARGE SCALE MRNA] OF 373-604</scope>
    <source>
        <strain>C57BL/6J</strain>
        <tissue>Testis</tissue>
    </source>
</reference>
<accession>F2YMG0</accession>
<accession>Q9CVU9</accession>
<protein>
    <recommendedName>
        <fullName>Serine protease 56</fullName>
        <ecNumber>3.4.21.-</ecNumber>
    </recommendedName>
</protein>
<gene>
    <name type="primary">Prss56</name>
</gene>
<comment type="function">
    <text evidence="6">Serine protease required during eye development.</text>
</comment>
<comment type="subcellular location">
    <subcellularLocation>
        <location evidence="6">Endoplasmic reticulum membrane</location>
        <topology evidence="6">Peripheral membrane protein</topology>
    </subcellularLocation>
</comment>
<comment type="tissue specificity">
    <text evidence="5 6">Expressed in the eye: present in the retina and in the optic nerve.</text>
</comment>
<comment type="developmental stage">
    <text evidence="5">First detected in the eye at 17 dpc and maintained into adulthood.</text>
</comment>
<comment type="disruption phenotype">
    <text evidence="6">Mice display the glaucoma-relevant mutant 4 (Grm4) phenotype, with angle-closure glaucoma and eyes having short axial length. High intraocular pressure (IOP) in mutant eyes increases with age and the anterior chambers become enlarged in some eyes at around 3 months of age. Eye's angles are not occluded with abnormal tissue (synechia) and have detectable trabecular meshwork and Schlemm's canal (2 important drainage structures). However, compromised aqueous humor drainage (outflow) contributes to the IOP elevation. After IOP elevation, mutants develop glaucomatous neurodegeneration, which is characterized by retinal ganglion cell death and optic nerve atrophy.</text>
</comment>
<comment type="similarity">
    <text evidence="3">Belongs to the peptidase S1 family.</text>
</comment>
<comment type="sequence caution" evidence="7">
    <conflict type="frameshift">
        <sequence resource="EMBL-CDS" id="BAB24587"/>
    </conflict>
</comment>
<dbReference type="EC" id="3.4.21.-"/>
<dbReference type="EMBL" id="JF323950">
    <property type="protein sequence ID" value="ADZ55664.1"/>
    <property type="molecule type" value="mRNA"/>
</dbReference>
<dbReference type="EMBL" id="JF698684">
    <property type="protein sequence ID" value="AED98564.1"/>
    <property type="molecule type" value="mRNA"/>
</dbReference>
<dbReference type="EMBL" id="GL456086">
    <property type="status" value="NOT_ANNOTATED_CDS"/>
    <property type="molecule type" value="Genomic_DNA"/>
</dbReference>
<dbReference type="EMBL" id="AK006434">
    <property type="protein sequence ID" value="BAB24587.1"/>
    <property type="status" value="ALT_FRAME"/>
    <property type="molecule type" value="mRNA"/>
</dbReference>
<dbReference type="CCDS" id="CCDS59538.1"/>
<dbReference type="RefSeq" id="NP_081360.1">
    <property type="nucleotide sequence ID" value="NM_027084.2"/>
</dbReference>
<dbReference type="SMR" id="F2YMG0"/>
<dbReference type="FunCoup" id="F2YMG0">
    <property type="interactions" value="176"/>
</dbReference>
<dbReference type="STRING" id="10090.ENSMUSP00000138773"/>
<dbReference type="MEROPS" id="S01.514"/>
<dbReference type="MEROPS" id="S01.951"/>
<dbReference type="GlyCosmos" id="F2YMG0">
    <property type="glycosylation" value="1 site, No reported glycans"/>
</dbReference>
<dbReference type="GlyGen" id="F2YMG0">
    <property type="glycosylation" value="1 site"/>
</dbReference>
<dbReference type="iPTMnet" id="F2YMG0"/>
<dbReference type="PhosphoSitePlus" id="F2YMG0"/>
<dbReference type="PaxDb" id="10090-ENSMUSP00000138773"/>
<dbReference type="PeptideAtlas" id="F2YMG0"/>
<dbReference type="ProteomicsDB" id="291753"/>
<dbReference type="Antibodypedia" id="71253">
    <property type="antibodies" value="43 antibodies from 10 providers"/>
</dbReference>
<dbReference type="Ensembl" id="ENSMUST00000044533.9">
    <property type="protein sequence ID" value="ENSMUSP00000138773.2"/>
    <property type="gene ID" value="ENSMUSG00000036480.10"/>
</dbReference>
<dbReference type="GeneID" id="69453"/>
<dbReference type="KEGG" id="mmu:69453"/>
<dbReference type="UCSC" id="uc007bwe.2">
    <property type="organism name" value="mouse"/>
</dbReference>
<dbReference type="AGR" id="MGI:1916703"/>
<dbReference type="CTD" id="646960"/>
<dbReference type="MGI" id="MGI:1916703">
    <property type="gene designation" value="Prss56"/>
</dbReference>
<dbReference type="VEuPathDB" id="HostDB:ENSMUSG00000036480"/>
<dbReference type="eggNOG" id="KOG3627">
    <property type="taxonomic scope" value="Eukaryota"/>
</dbReference>
<dbReference type="GeneTree" id="ENSGT00940000157183"/>
<dbReference type="HOGENOM" id="CLU_034171_0_0_1"/>
<dbReference type="InParanoid" id="F2YMG0"/>
<dbReference type="OMA" id="VMEIQHR"/>
<dbReference type="OrthoDB" id="6380398at2759"/>
<dbReference type="PhylomeDB" id="F2YMG0"/>
<dbReference type="BioGRID-ORCS" id="69453">
    <property type="hits" value="1 hit in 73 CRISPR screens"/>
</dbReference>
<dbReference type="PRO" id="PR:F2YMG0"/>
<dbReference type="Proteomes" id="UP000000589">
    <property type="component" value="Chromosome 1"/>
</dbReference>
<dbReference type="RNAct" id="F2YMG0">
    <property type="molecule type" value="protein"/>
</dbReference>
<dbReference type="Bgee" id="ENSMUSG00000036480">
    <property type="expression patterns" value="Expressed in seminiferous tubule of testis and 21 other cell types or tissues"/>
</dbReference>
<dbReference type="GO" id="GO:0005783">
    <property type="term" value="C:endoplasmic reticulum"/>
    <property type="evidence" value="ECO:0000314"/>
    <property type="project" value="UniProtKB"/>
</dbReference>
<dbReference type="GO" id="GO:0005789">
    <property type="term" value="C:endoplasmic reticulum membrane"/>
    <property type="evidence" value="ECO:0007669"/>
    <property type="project" value="UniProtKB-SubCell"/>
</dbReference>
<dbReference type="GO" id="GO:0004252">
    <property type="term" value="F:serine-type endopeptidase activity"/>
    <property type="evidence" value="ECO:0000314"/>
    <property type="project" value="UniProtKB"/>
</dbReference>
<dbReference type="GO" id="GO:0043010">
    <property type="term" value="P:camera-type eye development"/>
    <property type="evidence" value="ECO:0000315"/>
    <property type="project" value="MGI"/>
</dbReference>
<dbReference type="GO" id="GO:0006508">
    <property type="term" value="P:proteolysis"/>
    <property type="evidence" value="ECO:0000314"/>
    <property type="project" value="UniProtKB"/>
</dbReference>
<dbReference type="CDD" id="cd00190">
    <property type="entry name" value="Tryp_SPc"/>
    <property type="match status" value="1"/>
</dbReference>
<dbReference type="FunFam" id="2.40.10.10:FF:000081">
    <property type="entry name" value="Serine protease 56"/>
    <property type="match status" value="1"/>
</dbReference>
<dbReference type="Gene3D" id="2.40.10.10">
    <property type="entry name" value="Trypsin-like serine proteases"/>
    <property type="match status" value="1"/>
</dbReference>
<dbReference type="InterPro" id="IPR009003">
    <property type="entry name" value="Peptidase_S1_PA"/>
</dbReference>
<dbReference type="InterPro" id="IPR043504">
    <property type="entry name" value="Peptidase_S1_PA_chymotrypsin"/>
</dbReference>
<dbReference type="InterPro" id="IPR001314">
    <property type="entry name" value="Peptidase_S1A"/>
</dbReference>
<dbReference type="InterPro" id="IPR001254">
    <property type="entry name" value="Trypsin_dom"/>
</dbReference>
<dbReference type="InterPro" id="IPR018114">
    <property type="entry name" value="TRYPSIN_HIS"/>
</dbReference>
<dbReference type="InterPro" id="IPR033116">
    <property type="entry name" value="TRYPSIN_SER"/>
</dbReference>
<dbReference type="PANTHER" id="PTHR24252">
    <property type="entry name" value="ACROSIN-RELATED"/>
    <property type="match status" value="1"/>
</dbReference>
<dbReference type="PANTHER" id="PTHR24252:SF10">
    <property type="entry name" value="SERINE PROTEASE 56"/>
    <property type="match status" value="1"/>
</dbReference>
<dbReference type="Pfam" id="PF00089">
    <property type="entry name" value="Trypsin"/>
    <property type="match status" value="1"/>
</dbReference>
<dbReference type="PRINTS" id="PR00722">
    <property type="entry name" value="CHYMOTRYPSIN"/>
</dbReference>
<dbReference type="SMART" id="SM00020">
    <property type="entry name" value="Tryp_SPc"/>
    <property type="match status" value="1"/>
</dbReference>
<dbReference type="SUPFAM" id="SSF50494">
    <property type="entry name" value="Trypsin-like serine proteases"/>
    <property type="match status" value="1"/>
</dbReference>
<dbReference type="PROSITE" id="PS50240">
    <property type="entry name" value="TRYPSIN_DOM"/>
    <property type="match status" value="1"/>
</dbReference>
<dbReference type="PROSITE" id="PS00134">
    <property type="entry name" value="TRYPSIN_HIS"/>
    <property type="match status" value="1"/>
</dbReference>
<dbReference type="PROSITE" id="PS00135">
    <property type="entry name" value="TRYPSIN_SER"/>
    <property type="match status" value="1"/>
</dbReference>
<name>PRS56_MOUSE</name>
<sequence>MPLAMLLLLLLLLSPDSQTAHGHPLYTRLSPGALQVLSAQGTQALQAAQRSAQWAIKRVLMEIQHRLHECQGPGRPRPQAPLLQDPPEPVQCGERHQGVANTTRAHGRIVGGSTAPSGAWPWLVRLQLGGLPLCGGVLVAASWVLTAAHCFAGASNELLWTVMLAEGPQGEQAEEVQVNRILPHPKFDPQTFHNDLALVQLWTPVSPEGPARPICLPQGSREPPAGTPCAIAGWGALFEDGPESEAVREARVPLLSADTCQKVLGPGLRPSTMLCAGYLAGGIDSCQGDSGGPLTCSEPGPRPREVLFGVTSWGDGCGEPGKPGVYTRVTVFKDWLQEQMSAGPSTREPSCRELLNWNAREEEPFTDAPGLCAFYARQCLGSESSCARLALQQCLQRRRRCELRSLAHTLLGLLRGAQELLGPRPGLRRGVSAPARSAPSLQELPGHNPREQRLYSGSRIAGTWLQKPKPERRPETKGCPGLEPLQQKLAAIQRAHAWILQIPAEHLAMNFHEVLADLGSKTLTGLFRAWVRAGLGDQRVVFSGLVGLEPSTLAHSLPRLLVQALKAFRSASLTEGEPQAPWIGADQGQRLGKERQGQLQPPVP</sequence>
<proteinExistence type="evidence at transcript level"/>
<keyword id="KW-1015">Disulfide bond</keyword>
<keyword id="KW-0256">Endoplasmic reticulum</keyword>
<keyword id="KW-0325">Glycoprotein</keyword>
<keyword id="KW-0378">Hydrolase</keyword>
<keyword id="KW-0472">Membrane</keyword>
<keyword id="KW-0645">Protease</keyword>
<keyword id="KW-1185">Reference proteome</keyword>
<keyword id="KW-0720">Serine protease</keyword>
<keyword id="KW-0732">Signal</keyword>